<dbReference type="EMBL" id="CP000936">
    <property type="protein sequence ID" value="ACA37133.1"/>
    <property type="molecule type" value="Genomic_DNA"/>
</dbReference>
<dbReference type="RefSeq" id="WP_000817860.1">
    <property type="nucleotide sequence ID" value="NC_010380.1"/>
</dbReference>
<dbReference type="SMR" id="B1IBW3"/>
<dbReference type="KEGG" id="spv:SPH_1277"/>
<dbReference type="HOGENOM" id="CLU_027562_9_6_9"/>
<dbReference type="Proteomes" id="UP000002163">
    <property type="component" value="Chromosome"/>
</dbReference>
<dbReference type="GO" id="GO:0005737">
    <property type="term" value="C:cytoplasm"/>
    <property type="evidence" value="ECO:0007669"/>
    <property type="project" value="UniProtKB-SubCell"/>
</dbReference>
<dbReference type="GO" id="GO:0003677">
    <property type="term" value="F:DNA binding"/>
    <property type="evidence" value="ECO:0007669"/>
    <property type="project" value="UniProtKB-KW"/>
</dbReference>
<dbReference type="GO" id="GO:0009037">
    <property type="term" value="F:tyrosine-based site-specific recombinase activity"/>
    <property type="evidence" value="ECO:0007669"/>
    <property type="project" value="UniProtKB-UniRule"/>
</dbReference>
<dbReference type="GO" id="GO:0051301">
    <property type="term" value="P:cell division"/>
    <property type="evidence" value="ECO:0007669"/>
    <property type="project" value="UniProtKB-KW"/>
</dbReference>
<dbReference type="GO" id="GO:0007059">
    <property type="term" value="P:chromosome segregation"/>
    <property type="evidence" value="ECO:0007669"/>
    <property type="project" value="UniProtKB-UniRule"/>
</dbReference>
<dbReference type="GO" id="GO:0006310">
    <property type="term" value="P:DNA recombination"/>
    <property type="evidence" value="ECO:0007669"/>
    <property type="project" value="UniProtKB-UniRule"/>
</dbReference>
<dbReference type="CDD" id="cd00397">
    <property type="entry name" value="DNA_BRE_C"/>
    <property type="match status" value="1"/>
</dbReference>
<dbReference type="Gene3D" id="1.10.150.130">
    <property type="match status" value="1"/>
</dbReference>
<dbReference type="Gene3D" id="1.10.443.10">
    <property type="entry name" value="Intergrase catalytic core"/>
    <property type="match status" value="1"/>
</dbReference>
<dbReference type="HAMAP" id="MF_01816">
    <property type="entry name" value="Recomb_XerS"/>
    <property type="match status" value="1"/>
</dbReference>
<dbReference type="InterPro" id="IPR044068">
    <property type="entry name" value="CB"/>
</dbReference>
<dbReference type="InterPro" id="IPR011010">
    <property type="entry name" value="DNA_brk_join_enz"/>
</dbReference>
<dbReference type="InterPro" id="IPR013762">
    <property type="entry name" value="Integrase-like_cat_sf"/>
</dbReference>
<dbReference type="InterPro" id="IPR002104">
    <property type="entry name" value="Integrase_catalytic"/>
</dbReference>
<dbReference type="InterPro" id="IPR010998">
    <property type="entry name" value="Integrase_recombinase_N"/>
</dbReference>
<dbReference type="InterPro" id="IPR004107">
    <property type="entry name" value="Integrase_SAM-like_N"/>
</dbReference>
<dbReference type="InterPro" id="IPR023670">
    <property type="entry name" value="Recomb_XerS"/>
</dbReference>
<dbReference type="InterPro" id="IPR050090">
    <property type="entry name" value="Tyrosine_recombinase_XerCD"/>
</dbReference>
<dbReference type="NCBIfam" id="NF003462">
    <property type="entry name" value="PRK05084.1"/>
    <property type="match status" value="1"/>
</dbReference>
<dbReference type="PANTHER" id="PTHR30349">
    <property type="entry name" value="PHAGE INTEGRASE-RELATED"/>
    <property type="match status" value="1"/>
</dbReference>
<dbReference type="PANTHER" id="PTHR30349:SF77">
    <property type="entry name" value="TYROSINE RECOMBINASE XERC"/>
    <property type="match status" value="1"/>
</dbReference>
<dbReference type="Pfam" id="PF02899">
    <property type="entry name" value="Phage_int_SAM_1"/>
    <property type="match status" value="1"/>
</dbReference>
<dbReference type="Pfam" id="PF00589">
    <property type="entry name" value="Phage_integrase"/>
    <property type="match status" value="1"/>
</dbReference>
<dbReference type="SUPFAM" id="SSF56349">
    <property type="entry name" value="DNA breaking-rejoining enzymes"/>
    <property type="match status" value="1"/>
</dbReference>
<dbReference type="PROSITE" id="PS51900">
    <property type="entry name" value="CB"/>
    <property type="match status" value="1"/>
</dbReference>
<dbReference type="PROSITE" id="PS51898">
    <property type="entry name" value="TYR_RECOMBINASE"/>
    <property type="match status" value="1"/>
</dbReference>
<protein>
    <recommendedName>
        <fullName evidence="1">Tyrosine recombinase XerS</fullName>
    </recommendedName>
</protein>
<feature type="chain" id="PRO_0000372670" description="Tyrosine recombinase XerS">
    <location>
        <begin position="1"/>
        <end position="356"/>
    </location>
</feature>
<feature type="domain" description="Core-binding (CB)" evidence="3">
    <location>
        <begin position="16"/>
        <end position="121"/>
    </location>
</feature>
<feature type="domain" description="Tyr recombinase" evidence="2">
    <location>
        <begin position="169"/>
        <end position="354"/>
    </location>
</feature>
<feature type="active site" evidence="1">
    <location>
        <position position="210"/>
    </location>
</feature>
<feature type="active site" evidence="1">
    <location>
        <position position="234"/>
    </location>
</feature>
<feature type="active site" evidence="1">
    <location>
        <position position="306"/>
    </location>
</feature>
<feature type="active site" evidence="1">
    <location>
        <position position="309"/>
    </location>
</feature>
<feature type="active site" evidence="1">
    <location>
        <position position="332"/>
    </location>
</feature>
<feature type="active site" description="O-(3'-phospho-DNA)-tyrosine intermediate" evidence="1">
    <location>
        <position position="341"/>
    </location>
</feature>
<keyword id="KW-0131">Cell cycle</keyword>
<keyword id="KW-0132">Cell division</keyword>
<keyword id="KW-0159">Chromosome partition</keyword>
<keyword id="KW-0963">Cytoplasm</keyword>
<keyword id="KW-0229">DNA integration</keyword>
<keyword id="KW-0233">DNA recombination</keyword>
<keyword id="KW-0238">DNA-binding</keyword>
<accession>B1IBW3</accession>
<gene>
    <name evidence="1" type="primary">xerS</name>
    <name type="ordered locus">SPH_1277</name>
</gene>
<name>XERS_STRPI</name>
<comment type="function">
    <text evidence="1">Site-specific tyrosine recombinase, which acts by catalyzing the cutting and rejoining of the recombining DNA molecules. Essential to convert dimers of the bacterial chromosome into monomers to permit their segregation at cell division.</text>
</comment>
<comment type="activity regulation">
    <text evidence="1">FtsK is required for recombination.</text>
</comment>
<comment type="subcellular location">
    <subcellularLocation>
        <location evidence="1">Cytoplasm</location>
    </subcellularLocation>
</comment>
<comment type="similarity">
    <text evidence="1">Belongs to the 'phage' integrase family. XerS subfamily.</text>
</comment>
<reference key="1">
    <citation type="journal article" date="2010" name="Genome Biol.">
        <title>Structure and dynamics of the pan-genome of Streptococcus pneumoniae and closely related species.</title>
        <authorList>
            <person name="Donati C."/>
            <person name="Hiller N.L."/>
            <person name="Tettelin H."/>
            <person name="Muzzi A."/>
            <person name="Croucher N.J."/>
            <person name="Angiuoli S.V."/>
            <person name="Oggioni M."/>
            <person name="Dunning Hotopp J.C."/>
            <person name="Hu F.Z."/>
            <person name="Riley D.R."/>
            <person name="Covacci A."/>
            <person name="Mitchell T.J."/>
            <person name="Bentley S.D."/>
            <person name="Kilian M."/>
            <person name="Ehrlich G.D."/>
            <person name="Rappuoli R."/>
            <person name="Moxon E.R."/>
            <person name="Masignani V."/>
        </authorList>
    </citation>
    <scope>NUCLEOTIDE SEQUENCE [LARGE SCALE GENOMIC DNA]</scope>
    <source>
        <strain>Hungary19A-6</strain>
    </source>
</reference>
<evidence type="ECO:0000255" key="1">
    <source>
        <dbReference type="HAMAP-Rule" id="MF_01816"/>
    </source>
</evidence>
<evidence type="ECO:0000255" key="2">
    <source>
        <dbReference type="PROSITE-ProRule" id="PRU01246"/>
    </source>
</evidence>
<evidence type="ECO:0000255" key="3">
    <source>
        <dbReference type="PROSITE-ProRule" id="PRU01248"/>
    </source>
</evidence>
<sequence>MKREILLERIDKLKQIMPWYVLEYYQSKLAVPYSFTTLYEYLKEYDRFFSWVLESGISNADKMSDIPLSVLENMSKKDMESFILYLRERPLLNANTTKQGVSQTTINRTLSALSSLYKYLTEEVENDQGEPYFYRNVMKKVSTKKKKETLAARAENIKQKLFLGDETEGFLTYIDQEYPQQLSNRALSSFNKNKERDLAIIALLLASGVRLSEAVNLDLRDLNLKMMVIDVTRKGGKRDSVNVAAFAKPYLENYLAIRNQRYKTEKIDTALFLTLYRGVPNRIDASSVEKMVAKYSEDFKVRVTPHKLRHTLATRLYDATKSQVLVSHQLGHASTQVTDLYTHIVNDEQKNALDSL</sequence>
<proteinExistence type="inferred from homology"/>
<organism>
    <name type="scientific">Streptococcus pneumoniae (strain Hungary19A-6)</name>
    <dbReference type="NCBI Taxonomy" id="487214"/>
    <lineage>
        <taxon>Bacteria</taxon>
        <taxon>Bacillati</taxon>
        <taxon>Bacillota</taxon>
        <taxon>Bacilli</taxon>
        <taxon>Lactobacillales</taxon>
        <taxon>Streptococcaceae</taxon>
        <taxon>Streptococcus</taxon>
    </lineage>
</organism>